<keyword id="KW-0963">Cytoplasm</keyword>
<keyword id="KW-0808">Transferase</keyword>
<comment type="function">
    <text evidence="1">Transferase that catalyzes the transfer of sulfur from thiosulfate to thiophilic acceptors such as cyanide or dithiols. May function in a CysM-independent thiosulfate assimilation pathway by catalyzing the conversion of thiosulfate to sulfite, which can then be used for L-cysteine biosynthesis.</text>
</comment>
<comment type="catalytic activity">
    <reaction evidence="1">
        <text>thiosulfate + hydrogen cyanide = thiocyanate + sulfite + 2 H(+)</text>
        <dbReference type="Rhea" id="RHEA:16881"/>
        <dbReference type="ChEBI" id="CHEBI:15378"/>
        <dbReference type="ChEBI" id="CHEBI:17359"/>
        <dbReference type="ChEBI" id="CHEBI:18022"/>
        <dbReference type="ChEBI" id="CHEBI:18407"/>
        <dbReference type="ChEBI" id="CHEBI:33542"/>
        <dbReference type="EC" id="2.8.1.1"/>
    </reaction>
</comment>
<comment type="catalytic activity">
    <reaction evidence="1">
        <text>thiosulfate + [thioredoxin]-dithiol = [thioredoxin]-disulfide + hydrogen sulfide + sulfite + 2 H(+)</text>
        <dbReference type="Rhea" id="RHEA:83859"/>
        <dbReference type="Rhea" id="RHEA-COMP:10698"/>
        <dbReference type="Rhea" id="RHEA-COMP:10700"/>
        <dbReference type="ChEBI" id="CHEBI:15378"/>
        <dbReference type="ChEBI" id="CHEBI:17359"/>
        <dbReference type="ChEBI" id="CHEBI:29919"/>
        <dbReference type="ChEBI" id="CHEBI:29950"/>
        <dbReference type="ChEBI" id="CHEBI:33542"/>
        <dbReference type="ChEBI" id="CHEBI:50058"/>
    </reaction>
</comment>
<comment type="subcellular location">
    <subcellularLocation>
        <location evidence="1">Cytoplasm</location>
    </subcellularLocation>
</comment>
<comment type="similarity">
    <text evidence="1">Belongs to the GlpE family.</text>
</comment>
<evidence type="ECO:0000255" key="1">
    <source>
        <dbReference type="HAMAP-Rule" id="MF_01009"/>
    </source>
</evidence>
<feature type="chain" id="PRO_1000190107" description="Thiosulfate sulfurtransferase GlpE">
    <location>
        <begin position="1"/>
        <end position="108"/>
    </location>
</feature>
<feature type="domain" description="Rhodanese" evidence="1">
    <location>
        <begin position="17"/>
        <end position="105"/>
    </location>
</feature>
<feature type="active site" description="Cysteine persulfide intermediate" evidence="1">
    <location>
        <position position="65"/>
    </location>
</feature>
<organism>
    <name type="scientific">Salmonella heidelberg (strain SL476)</name>
    <dbReference type="NCBI Taxonomy" id="454169"/>
    <lineage>
        <taxon>Bacteria</taxon>
        <taxon>Pseudomonadati</taxon>
        <taxon>Pseudomonadota</taxon>
        <taxon>Gammaproteobacteria</taxon>
        <taxon>Enterobacterales</taxon>
        <taxon>Enterobacteriaceae</taxon>
        <taxon>Salmonella</taxon>
    </lineage>
</organism>
<accession>B4TKV1</accession>
<reference key="1">
    <citation type="journal article" date="2011" name="J. Bacteriol.">
        <title>Comparative genomics of 28 Salmonella enterica isolates: evidence for CRISPR-mediated adaptive sublineage evolution.</title>
        <authorList>
            <person name="Fricke W.F."/>
            <person name="Mammel M.K."/>
            <person name="McDermott P.F."/>
            <person name="Tartera C."/>
            <person name="White D.G."/>
            <person name="Leclerc J.E."/>
            <person name="Ravel J."/>
            <person name="Cebula T.A."/>
        </authorList>
    </citation>
    <scope>NUCLEOTIDE SEQUENCE [LARGE SCALE GENOMIC DNA]</scope>
    <source>
        <strain>SL476</strain>
    </source>
</reference>
<dbReference type="EC" id="2.8.1.1" evidence="1"/>
<dbReference type="EMBL" id="CP001120">
    <property type="protein sequence ID" value="ACF70143.1"/>
    <property type="molecule type" value="Genomic_DNA"/>
</dbReference>
<dbReference type="RefSeq" id="WP_000434523.1">
    <property type="nucleotide sequence ID" value="NC_011083.1"/>
</dbReference>
<dbReference type="SMR" id="B4TKV1"/>
<dbReference type="KEGG" id="seh:SeHA_C3833"/>
<dbReference type="HOGENOM" id="CLU_089574_14_0_6"/>
<dbReference type="Proteomes" id="UP000001866">
    <property type="component" value="Chromosome"/>
</dbReference>
<dbReference type="GO" id="GO:0005737">
    <property type="term" value="C:cytoplasm"/>
    <property type="evidence" value="ECO:0007669"/>
    <property type="project" value="UniProtKB-SubCell"/>
</dbReference>
<dbReference type="GO" id="GO:0004792">
    <property type="term" value="F:thiosulfate-cyanide sulfurtransferase activity"/>
    <property type="evidence" value="ECO:0007669"/>
    <property type="project" value="UniProtKB-UniRule"/>
</dbReference>
<dbReference type="GO" id="GO:0006071">
    <property type="term" value="P:glycerol metabolic process"/>
    <property type="evidence" value="ECO:0007669"/>
    <property type="project" value="UniProtKB-UniRule"/>
</dbReference>
<dbReference type="CDD" id="cd01444">
    <property type="entry name" value="GlpE_ST"/>
    <property type="match status" value="1"/>
</dbReference>
<dbReference type="FunFam" id="3.40.250.10:FF:000007">
    <property type="entry name" value="Thiosulfate sulfurtransferase GlpE"/>
    <property type="match status" value="1"/>
</dbReference>
<dbReference type="Gene3D" id="3.40.250.10">
    <property type="entry name" value="Rhodanese-like domain"/>
    <property type="match status" value="1"/>
</dbReference>
<dbReference type="HAMAP" id="MF_01009">
    <property type="entry name" value="Thiosulf_sulfurtr"/>
    <property type="match status" value="1"/>
</dbReference>
<dbReference type="InterPro" id="IPR050229">
    <property type="entry name" value="GlpE_sulfurtransferase"/>
</dbReference>
<dbReference type="InterPro" id="IPR001763">
    <property type="entry name" value="Rhodanese-like_dom"/>
</dbReference>
<dbReference type="InterPro" id="IPR036873">
    <property type="entry name" value="Rhodanese-like_dom_sf"/>
</dbReference>
<dbReference type="InterPro" id="IPR023695">
    <property type="entry name" value="Thiosulf_sulfurTrfase"/>
</dbReference>
<dbReference type="NCBIfam" id="NF001195">
    <property type="entry name" value="PRK00162.1"/>
    <property type="match status" value="1"/>
</dbReference>
<dbReference type="PANTHER" id="PTHR43031">
    <property type="entry name" value="FAD-DEPENDENT OXIDOREDUCTASE"/>
    <property type="match status" value="1"/>
</dbReference>
<dbReference type="PANTHER" id="PTHR43031:SF6">
    <property type="entry name" value="THIOSULFATE SULFURTRANSFERASE GLPE"/>
    <property type="match status" value="1"/>
</dbReference>
<dbReference type="Pfam" id="PF00581">
    <property type="entry name" value="Rhodanese"/>
    <property type="match status" value="1"/>
</dbReference>
<dbReference type="SMART" id="SM00450">
    <property type="entry name" value="RHOD"/>
    <property type="match status" value="1"/>
</dbReference>
<dbReference type="SUPFAM" id="SSF52821">
    <property type="entry name" value="Rhodanese/Cell cycle control phosphatase"/>
    <property type="match status" value="1"/>
</dbReference>
<dbReference type="PROSITE" id="PS50206">
    <property type="entry name" value="RHODANESE_3"/>
    <property type="match status" value="1"/>
</dbReference>
<gene>
    <name evidence="1" type="primary">glpE</name>
    <name type="ordered locus">SeHA_C3833</name>
</gene>
<proteinExistence type="inferred from homology"/>
<name>GLPE_SALHS</name>
<protein>
    <recommendedName>
        <fullName evidence="1">Thiosulfate sulfurtransferase GlpE</fullName>
        <ecNumber evidence="1">2.8.1.1</ecNumber>
    </recommendedName>
</protein>
<sequence>MEQFECITVEEAYQKLHQGAAVLVDIRDPQSYAMGHAPQAFHLTNDTLGAFMREHGFDTAVMVMCYHGNSSKGAAQYLLQQGYDAVYSIDGGFEAWHRRFPADVANGA</sequence>